<evidence type="ECO:0000255" key="1">
    <source>
        <dbReference type="HAMAP-Rule" id="MF_02120"/>
    </source>
</evidence>
<evidence type="ECO:0000269" key="2">
    <source>
    </source>
</evidence>
<evidence type="ECO:0000269" key="3">
    <source>
    </source>
</evidence>
<evidence type="ECO:0000269" key="4">
    <source>
    </source>
</evidence>
<evidence type="ECO:0000305" key="5"/>
<evidence type="ECO:0000305" key="6">
    <source>
    </source>
</evidence>
<evidence type="ECO:0000305" key="7">
    <source>
    </source>
</evidence>
<evidence type="ECO:0007829" key="8">
    <source>
        <dbReference type="PDB" id="2O0T"/>
    </source>
</evidence>
<proteinExistence type="evidence at protein level"/>
<sequence length="447" mass="47458">MNELLHLAPNVWPRNTTRDEVGVVCIAGIPLTQLAQEYGTPLFVIDEDDFRSRCRETAAAFGSGANVHYAAKAFLCSEVARWISEEGLCLDVCTGGELAVALHASFPPERITLHGNNKSVSELTAAVKAGVGHIVVDSMTEIERLDAIAGEAGIVQDVLVRLTVGVEAHTHEFISTAHEDQKFGLSVASGAAMAAVRRVFATDHLRLVGLHSHIGSQIFDVDGFELAAHRVIGLLRDVVGEFGPEKTAQIATVDLGGGLGISYLPSDDPPPIAELAAKLGTIVSDESTAVGLPTPKLVVEPGRAIAGPGTITLYEVGTVKDVDVSATAHRRYVSVDGGMSDNIRTALYGAQYDVRLVSRVSDAPPVPARLVGKHCESGDIIVRDTWVPDDIRPGDLVAVAATGAYCYSLSSRYNMVGRPAVVAVHAGNARLVLRRETVDDLLSLEVR</sequence>
<dbReference type="EC" id="4.1.1.20" evidence="1"/>
<dbReference type="EMBL" id="M94109">
    <property type="protein sequence ID" value="AAA25361.1"/>
    <property type="molecule type" value="Genomic_DNA"/>
</dbReference>
<dbReference type="EMBL" id="AL123456">
    <property type="protein sequence ID" value="CCP44050.1"/>
    <property type="molecule type" value="Genomic_DNA"/>
</dbReference>
<dbReference type="PIR" id="A70773">
    <property type="entry name" value="A70773"/>
</dbReference>
<dbReference type="RefSeq" id="NP_215809.1">
    <property type="nucleotide sequence ID" value="NC_000962.3"/>
</dbReference>
<dbReference type="RefSeq" id="WP_003406632.1">
    <property type="nucleotide sequence ID" value="NZ_NVQJ01000030.1"/>
</dbReference>
<dbReference type="PDB" id="1HKV">
    <property type="method" value="X-ray"/>
    <property type="resolution" value="2.60 A"/>
    <property type="chains" value="A/B=1-447"/>
</dbReference>
<dbReference type="PDB" id="1HKW">
    <property type="method" value="X-ray"/>
    <property type="resolution" value="2.80 A"/>
    <property type="chains" value="A/B=1-447"/>
</dbReference>
<dbReference type="PDB" id="2O0T">
    <property type="method" value="X-ray"/>
    <property type="resolution" value="2.33 A"/>
    <property type="chains" value="A/B/C/D=2-447"/>
</dbReference>
<dbReference type="PDBsum" id="1HKV"/>
<dbReference type="PDBsum" id="1HKW"/>
<dbReference type="PDBsum" id="2O0T"/>
<dbReference type="SMR" id="P9WIU7"/>
<dbReference type="FunCoup" id="P9WIU7">
    <property type="interactions" value="310"/>
</dbReference>
<dbReference type="STRING" id="83332.Rv1293"/>
<dbReference type="PaxDb" id="83332-Rv1293"/>
<dbReference type="DNASU" id="886960"/>
<dbReference type="GeneID" id="45425267"/>
<dbReference type="GeneID" id="886960"/>
<dbReference type="KEGG" id="mtu:Rv1293"/>
<dbReference type="KEGG" id="mtv:RVBD_1293"/>
<dbReference type="PATRIC" id="fig|83332.111.peg.1444"/>
<dbReference type="TubercuList" id="Rv1293"/>
<dbReference type="eggNOG" id="COG1166">
    <property type="taxonomic scope" value="Bacteria"/>
</dbReference>
<dbReference type="InParanoid" id="P9WIU7"/>
<dbReference type="OrthoDB" id="9802241at2"/>
<dbReference type="PhylomeDB" id="P9WIU7"/>
<dbReference type="BRENDA" id="4.1.1.20">
    <property type="organism ID" value="3445"/>
</dbReference>
<dbReference type="UniPathway" id="UPA00034">
    <property type="reaction ID" value="UER00027"/>
</dbReference>
<dbReference type="EvolutionaryTrace" id="P9WIU7"/>
<dbReference type="Proteomes" id="UP000001584">
    <property type="component" value="Chromosome"/>
</dbReference>
<dbReference type="GO" id="GO:0009274">
    <property type="term" value="C:peptidoglycan-based cell wall"/>
    <property type="evidence" value="ECO:0007005"/>
    <property type="project" value="MTBBASE"/>
</dbReference>
<dbReference type="GO" id="GO:0008836">
    <property type="term" value="F:diaminopimelate decarboxylase activity"/>
    <property type="evidence" value="ECO:0000314"/>
    <property type="project" value="MTBBASE"/>
</dbReference>
<dbReference type="GO" id="GO:0030170">
    <property type="term" value="F:pyridoxal phosphate binding"/>
    <property type="evidence" value="ECO:0000314"/>
    <property type="project" value="MTBBASE"/>
</dbReference>
<dbReference type="GO" id="GO:0009089">
    <property type="term" value="P:lysine biosynthetic process via diaminopimelate"/>
    <property type="evidence" value="ECO:0000314"/>
    <property type="project" value="MTBBASE"/>
</dbReference>
<dbReference type="CDD" id="cd06828">
    <property type="entry name" value="PLPDE_III_DapDC"/>
    <property type="match status" value="1"/>
</dbReference>
<dbReference type="FunFam" id="2.40.37.10:FF:000003">
    <property type="entry name" value="Diaminopimelate decarboxylase"/>
    <property type="match status" value="1"/>
</dbReference>
<dbReference type="FunFam" id="3.20.20.10:FF:000003">
    <property type="entry name" value="Diaminopimelate decarboxylase"/>
    <property type="match status" value="1"/>
</dbReference>
<dbReference type="Gene3D" id="3.20.20.10">
    <property type="entry name" value="Alanine racemase"/>
    <property type="match status" value="1"/>
</dbReference>
<dbReference type="Gene3D" id="2.40.37.10">
    <property type="entry name" value="Lyase, Ornithine Decarboxylase, Chain A, domain 1"/>
    <property type="match status" value="1"/>
</dbReference>
<dbReference type="HAMAP" id="MF_02120">
    <property type="entry name" value="LysA"/>
    <property type="match status" value="1"/>
</dbReference>
<dbReference type="InterPro" id="IPR009006">
    <property type="entry name" value="Ala_racemase/Decarboxylase_C"/>
</dbReference>
<dbReference type="InterPro" id="IPR002986">
    <property type="entry name" value="DAP_deCOOHase_LysA"/>
</dbReference>
<dbReference type="InterPro" id="IPR022643">
    <property type="entry name" value="De-COase2_C"/>
</dbReference>
<dbReference type="InterPro" id="IPR022657">
    <property type="entry name" value="De-COase2_CS"/>
</dbReference>
<dbReference type="InterPro" id="IPR022644">
    <property type="entry name" value="De-COase2_N"/>
</dbReference>
<dbReference type="InterPro" id="IPR022653">
    <property type="entry name" value="De-COase2_pyr-phos_BS"/>
</dbReference>
<dbReference type="InterPro" id="IPR000183">
    <property type="entry name" value="Orn/DAP/Arg_de-COase"/>
</dbReference>
<dbReference type="InterPro" id="IPR029066">
    <property type="entry name" value="PLP-binding_barrel"/>
</dbReference>
<dbReference type="NCBIfam" id="TIGR01048">
    <property type="entry name" value="lysA"/>
    <property type="match status" value="1"/>
</dbReference>
<dbReference type="PANTHER" id="PTHR43727">
    <property type="entry name" value="DIAMINOPIMELATE DECARBOXYLASE"/>
    <property type="match status" value="1"/>
</dbReference>
<dbReference type="PANTHER" id="PTHR43727:SF2">
    <property type="entry name" value="GROUP IV DECARBOXYLASE"/>
    <property type="match status" value="1"/>
</dbReference>
<dbReference type="Pfam" id="PF02784">
    <property type="entry name" value="Orn_Arg_deC_N"/>
    <property type="match status" value="1"/>
</dbReference>
<dbReference type="Pfam" id="PF00278">
    <property type="entry name" value="Orn_DAP_Arg_deC"/>
    <property type="match status" value="1"/>
</dbReference>
<dbReference type="PRINTS" id="PR01181">
    <property type="entry name" value="DAPDCRBXLASE"/>
</dbReference>
<dbReference type="PRINTS" id="PR01179">
    <property type="entry name" value="ODADCRBXLASE"/>
</dbReference>
<dbReference type="SUPFAM" id="SSF50621">
    <property type="entry name" value="Alanine racemase C-terminal domain-like"/>
    <property type="match status" value="2"/>
</dbReference>
<dbReference type="SUPFAM" id="SSF51419">
    <property type="entry name" value="PLP-binding barrel"/>
    <property type="match status" value="1"/>
</dbReference>
<dbReference type="PROSITE" id="PS00878">
    <property type="entry name" value="ODR_DC_2_1"/>
    <property type="match status" value="1"/>
</dbReference>
<dbReference type="PROSITE" id="PS00879">
    <property type="entry name" value="ODR_DC_2_2"/>
    <property type="match status" value="1"/>
</dbReference>
<comment type="function">
    <text evidence="1 2 5">Specifically catalyzes the decarboxylation of meso-diaminopimelate (meso-DAP) to L-lysine (Probable). Is essential for the viability of M.tuberculosis in the host (PubMed:12637582).</text>
</comment>
<comment type="catalytic activity">
    <reaction evidence="1">
        <text>meso-2,6-diaminopimelate + H(+) = L-lysine + CO2</text>
        <dbReference type="Rhea" id="RHEA:15101"/>
        <dbReference type="ChEBI" id="CHEBI:15378"/>
        <dbReference type="ChEBI" id="CHEBI:16526"/>
        <dbReference type="ChEBI" id="CHEBI:32551"/>
        <dbReference type="ChEBI" id="CHEBI:57791"/>
        <dbReference type="EC" id="4.1.1.20"/>
    </reaction>
</comment>
<comment type="cofactor">
    <cofactor evidence="2">
        <name>pyridoxal 5'-phosphate</name>
        <dbReference type="ChEBI" id="CHEBI:597326"/>
    </cofactor>
</comment>
<comment type="pathway">
    <text evidence="1">Amino-acid biosynthesis; L-lysine biosynthesis via DAP pathway; L-lysine from DL-2,6-diaminopimelate: step 1/1.</text>
</comment>
<comment type="subunit">
    <text evidence="2 3 4">Homodimer; disulfide-linked. Can also form homotetramer at higher protein concentrations.</text>
</comment>
<comment type="disruption phenotype">
    <text evidence="2">Strains lacking this gene are lysine auxotrophs. They cannot survive in immunocompromised mice.</text>
</comment>
<comment type="miscellaneous">
    <text evidence="7">Was identified as a high-confidence drug target.</text>
</comment>
<comment type="similarity">
    <text evidence="1">Belongs to the Orn/Lys/Arg decarboxylase class-II family. LysA subfamily.</text>
</comment>
<organism>
    <name type="scientific">Mycobacterium tuberculosis (strain ATCC 25618 / H37Rv)</name>
    <dbReference type="NCBI Taxonomy" id="83332"/>
    <lineage>
        <taxon>Bacteria</taxon>
        <taxon>Bacillati</taxon>
        <taxon>Actinomycetota</taxon>
        <taxon>Actinomycetes</taxon>
        <taxon>Mycobacteriales</taxon>
        <taxon>Mycobacteriaceae</taxon>
        <taxon>Mycobacterium</taxon>
        <taxon>Mycobacterium tuberculosis complex</taxon>
    </lineage>
</organism>
<keyword id="KW-0002">3D-structure</keyword>
<keyword id="KW-0028">Amino-acid biosynthesis</keyword>
<keyword id="KW-0210">Decarboxylase</keyword>
<keyword id="KW-1015">Disulfide bond</keyword>
<keyword id="KW-0456">Lyase</keyword>
<keyword id="KW-0457">Lysine biosynthesis</keyword>
<keyword id="KW-0663">Pyridoxal phosphate</keyword>
<keyword id="KW-1185">Reference proteome</keyword>
<name>DCDA_MYCTU</name>
<reference key="1">
    <citation type="journal article" date="1993" name="Gene">
        <title>Cloning of the lysA gene from Mycobacterium tuberculosis.</title>
        <authorList>
            <person name="Andersen A.B."/>
            <person name="Hansen E.B."/>
        </authorList>
    </citation>
    <scope>NUCLEOTIDE SEQUENCE [GENOMIC DNA]</scope>
    <source>
        <strain>ATCC 35801 / TMC 107 / Erdman</strain>
    </source>
</reference>
<reference key="2">
    <citation type="journal article" date="1998" name="Nature">
        <title>Deciphering the biology of Mycobacterium tuberculosis from the complete genome sequence.</title>
        <authorList>
            <person name="Cole S.T."/>
            <person name="Brosch R."/>
            <person name="Parkhill J."/>
            <person name="Garnier T."/>
            <person name="Churcher C.M."/>
            <person name="Harris D.E."/>
            <person name="Gordon S.V."/>
            <person name="Eiglmeier K."/>
            <person name="Gas S."/>
            <person name="Barry C.E. III"/>
            <person name="Tekaia F."/>
            <person name="Badcock K."/>
            <person name="Basham D."/>
            <person name="Brown D."/>
            <person name="Chillingworth T."/>
            <person name="Connor R."/>
            <person name="Davies R.M."/>
            <person name="Devlin K."/>
            <person name="Feltwell T."/>
            <person name="Gentles S."/>
            <person name="Hamlin N."/>
            <person name="Holroyd S."/>
            <person name="Hornsby T."/>
            <person name="Jagels K."/>
            <person name="Krogh A."/>
            <person name="McLean J."/>
            <person name="Moule S."/>
            <person name="Murphy L.D."/>
            <person name="Oliver S."/>
            <person name="Osborne J."/>
            <person name="Quail M.A."/>
            <person name="Rajandream M.A."/>
            <person name="Rogers J."/>
            <person name="Rutter S."/>
            <person name="Seeger K."/>
            <person name="Skelton S."/>
            <person name="Squares S."/>
            <person name="Squares R."/>
            <person name="Sulston J.E."/>
            <person name="Taylor K."/>
            <person name="Whitehead S."/>
            <person name="Barrell B.G."/>
        </authorList>
    </citation>
    <scope>NUCLEOTIDE SEQUENCE [LARGE SCALE GENOMIC DNA]</scope>
    <source>
        <strain>ATCC 25618 / H37Rv</strain>
    </source>
</reference>
<reference key="3">
    <citation type="journal article" date="2008" name="BMC Syst. Biol.">
        <title>targetTB: a target identification pipeline for Mycobacterium tuberculosis through an interactome, reactome and genome-scale structural analysis.</title>
        <authorList>
            <person name="Raman K."/>
            <person name="Yeturu K."/>
            <person name="Chandra N."/>
        </authorList>
    </citation>
    <scope>IDENTIFICATION AS A DRUG TARGET [LARGE SCALE ANALYSIS]</scope>
</reference>
<reference key="4">
    <citation type="journal article" date="2005" name="Acta Crystallogr. F">
        <title>Cloning, expression, purification, crystallization and preliminary X-ray diffraction analysis of LysA (Rv1293) from Mycobacterium tuberculosis.</title>
        <authorList>
            <person name="Kefala G."/>
            <person name="Perry L.J."/>
            <person name="Weiss M.S."/>
        </authorList>
    </citation>
    <scope>CRYSTALLIZATION</scope>
    <scope>SUBUNIT</scope>
    <source>
        <strain>ATCC 25618 / H37Rv</strain>
    </source>
</reference>
<reference key="5">
    <citation type="journal article" date="2011" name="Mol. Cell. Proteomics">
        <title>Proteogenomic analysis of Mycobacterium tuberculosis by high resolution mass spectrometry.</title>
        <authorList>
            <person name="Kelkar D.S."/>
            <person name="Kumar D."/>
            <person name="Kumar P."/>
            <person name="Balakrishnan L."/>
            <person name="Muthusamy B."/>
            <person name="Yadav A.K."/>
            <person name="Shrivastava P."/>
            <person name="Marimuthu A."/>
            <person name="Anand S."/>
            <person name="Sundaram H."/>
            <person name="Kingsbury R."/>
            <person name="Harsha H.C."/>
            <person name="Nair B."/>
            <person name="Prasad T.S."/>
            <person name="Chauhan D.S."/>
            <person name="Katoch K."/>
            <person name="Katoch V.M."/>
            <person name="Kumar P."/>
            <person name="Chaerkady R."/>
            <person name="Ramachandran S."/>
            <person name="Dash D."/>
            <person name="Pandey A."/>
        </authorList>
    </citation>
    <scope>IDENTIFICATION BY MASS SPECTROMETRY [LARGE SCALE ANALYSIS]</scope>
    <source>
        <strain>ATCC 25618 / H37Rv</strain>
    </source>
</reference>
<reference key="6">
    <citation type="journal article" date="2003" name="J. Biol. Chem.">
        <title>Crystal structure of Mycobacterium tuberculosis diaminopimelate decarboxylase, an essential enzyme in bacterial lysine biosynthesis.</title>
        <authorList>
            <person name="Gokulan K."/>
            <person name="Rupp B."/>
            <person name="Pavelka M.S. Jr."/>
            <person name="Jacobs W.R. Jr."/>
            <person name="Sacchettini J.C."/>
        </authorList>
    </citation>
    <scope>X-RAY CRYSTALLOGRAPHY (2.6 ANGSTROMS) IN COMPLEXES WITH PLP AND LYSINE</scope>
    <scope>FUNCTION</scope>
    <scope>COFACTOR</scope>
    <scope>SUBUNIT</scope>
    <scope>DISULFIDE BOND</scope>
    <scope>DISRUPTION PHENOTYPE</scope>
    <source>
        <strain>ATCC 25618 / H37Rv</strain>
    </source>
</reference>
<reference key="7">
    <citation type="journal article" date="2009" name="J. Struct. Funct. Genomics">
        <title>The three-dimensional structure of diaminopimelate decarboxylase from Mycobacterium tuberculosis reveals a tetrameric enzyme organisation.</title>
        <authorList>
            <person name="Weyand S."/>
            <person name="Kefala G."/>
            <person name="Svergun D.I."/>
            <person name="Weiss M.S."/>
        </authorList>
    </citation>
    <scope>X-RAY CRYSTALLOGRAPHY (2.33 ANGSTROMS)</scope>
    <scope>SUBUNIT</scope>
    <scope>DISULFIDE BOND</scope>
    <source>
        <strain>ATCC 25618 / H37Rv</strain>
    </source>
</reference>
<accession>P9WIU7</accession>
<accession>L0T7U9</accession>
<accession>P0A5M4</accession>
<accession>P31848</accession>
<gene>
    <name evidence="1" type="primary">lysA</name>
    <name type="ordered locus">Rv1293</name>
    <name type="ORF">MTCY373.13</name>
</gene>
<protein>
    <recommendedName>
        <fullName evidence="1">Diaminopimelate decarboxylase</fullName>
        <shortName evidence="1">DAP decarboxylase</shortName>
        <shortName evidence="1">DAPDC</shortName>
        <ecNumber evidence="1">4.1.1.20</ecNumber>
    </recommendedName>
</protein>
<feature type="chain" id="PRO_0000149929" description="Diaminopimelate decarboxylase">
    <location>
        <begin position="1"/>
        <end position="447"/>
    </location>
</feature>
<feature type="active site" description="Proton donor" evidence="1">
    <location>
        <position position="375"/>
    </location>
</feature>
<feature type="binding site" evidence="6">
    <location>
        <position position="216"/>
    </location>
    <ligand>
        <name>substrate</name>
    </ligand>
</feature>
<feature type="binding site" evidence="2">
    <location>
        <position position="258"/>
    </location>
    <ligand>
        <name>pyridoxal 5'-phosphate</name>
        <dbReference type="ChEBI" id="CHEBI:597326"/>
    </ligand>
</feature>
<feature type="binding site" evidence="1 2">
    <location>
        <begin position="300"/>
        <end position="303"/>
    </location>
    <ligand>
        <name>pyridoxal 5'-phosphate</name>
        <dbReference type="ChEBI" id="CHEBI:597326"/>
    </ligand>
</feature>
<feature type="binding site" evidence="6">
    <location>
        <position position="303"/>
    </location>
    <ligand>
        <name>substrate</name>
    </ligand>
</feature>
<feature type="binding site" evidence="6">
    <location>
        <position position="344"/>
    </location>
    <ligand>
        <name>substrate</name>
    </ligand>
</feature>
<feature type="binding site" evidence="1">
    <location>
        <position position="348"/>
    </location>
    <ligand>
        <name>substrate</name>
    </ligand>
</feature>
<feature type="binding site" evidence="6">
    <location>
        <position position="376"/>
    </location>
    <ligand>
        <name>substrate</name>
    </ligand>
</feature>
<feature type="binding site" evidence="2">
    <location>
        <position position="405"/>
    </location>
    <ligand>
        <name>pyridoxal 5'-phosphate</name>
        <dbReference type="ChEBI" id="CHEBI:597326"/>
    </ligand>
</feature>
<feature type="binding site" evidence="6">
    <location>
        <position position="405"/>
    </location>
    <ligand>
        <name>substrate</name>
    </ligand>
</feature>
<feature type="modified residue" description="N6-(pyridoxal phosphate)lysine" evidence="2">
    <location>
        <position position="72"/>
    </location>
</feature>
<feature type="disulfide bond" description="Interchain (with C-375)" evidence="2">
    <location>
        <position position="93"/>
    </location>
</feature>
<feature type="disulfide bond" description="Interchain (with C-72)" evidence="4">
    <location>
        <position position="375"/>
    </location>
</feature>
<feature type="sequence conflict" description="In Ref. 1; AAA25361." evidence="5" ref="1">
    <original>A</original>
    <variation>G</variation>
    <location>
        <position position="346"/>
    </location>
</feature>
<feature type="sequence conflict" description="In Ref. 1; AAA25361." evidence="5" ref="1">
    <original>DDIRPGDLVAVAATGAYCYSLSSRYNMVGRPAVVAVHA</original>
    <variation>TIFGPAIWLRLPPPALLLFAVESLQHGRPSRCGSGAR</variation>
    <location>
        <begin position="389"/>
        <end position="426"/>
    </location>
</feature>
<feature type="turn" evidence="8">
    <location>
        <begin position="9"/>
        <end position="11"/>
    </location>
</feature>
<feature type="strand" evidence="8">
    <location>
        <begin position="16"/>
        <end position="18"/>
    </location>
</feature>
<feature type="strand" evidence="8">
    <location>
        <begin position="20"/>
        <end position="22"/>
    </location>
</feature>
<feature type="strand" evidence="8">
    <location>
        <begin position="24"/>
        <end position="26"/>
    </location>
</feature>
<feature type="helix" evidence="8">
    <location>
        <begin position="31"/>
        <end position="38"/>
    </location>
</feature>
<feature type="strand" evidence="8">
    <location>
        <begin position="40"/>
        <end position="46"/>
    </location>
</feature>
<feature type="helix" evidence="8">
    <location>
        <begin position="47"/>
        <end position="60"/>
    </location>
</feature>
<feature type="helix" evidence="8">
    <location>
        <begin position="64"/>
        <end position="66"/>
    </location>
</feature>
<feature type="strand" evidence="8">
    <location>
        <begin position="67"/>
        <end position="70"/>
    </location>
</feature>
<feature type="helix" evidence="8">
    <location>
        <begin position="71"/>
        <end position="73"/>
    </location>
</feature>
<feature type="helix" evidence="8">
    <location>
        <begin position="77"/>
        <end position="86"/>
    </location>
</feature>
<feature type="strand" evidence="8">
    <location>
        <begin position="89"/>
        <end position="92"/>
    </location>
</feature>
<feature type="helix" evidence="8">
    <location>
        <begin position="95"/>
        <end position="103"/>
    </location>
</feature>
<feature type="helix" evidence="8">
    <location>
        <begin position="108"/>
        <end position="110"/>
    </location>
</feature>
<feature type="strand" evidence="8">
    <location>
        <begin position="111"/>
        <end position="113"/>
    </location>
</feature>
<feature type="helix" evidence="8">
    <location>
        <begin position="120"/>
        <end position="129"/>
    </location>
</feature>
<feature type="strand" evidence="8">
    <location>
        <begin position="132"/>
        <end position="136"/>
    </location>
</feature>
<feature type="helix" evidence="8">
    <location>
        <begin position="139"/>
        <end position="152"/>
    </location>
</feature>
<feature type="strand" evidence="8">
    <location>
        <begin position="156"/>
        <end position="163"/>
    </location>
</feature>
<feature type="strand" evidence="8">
    <location>
        <begin position="165"/>
        <end position="170"/>
    </location>
</feature>
<feature type="strand" evidence="8">
    <location>
        <begin position="172"/>
        <end position="178"/>
    </location>
</feature>
<feature type="strand" evidence="8">
    <location>
        <begin position="181"/>
        <end position="186"/>
    </location>
</feature>
<feature type="turn" evidence="8">
    <location>
        <begin position="187"/>
        <end position="190"/>
    </location>
</feature>
<feature type="helix" evidence="8">
    <location>
        <begin position="191"/>
        <end position="201"/>
    </location>
</feature>
<feature type="strand" evidence="8">
    <location>
        <begin position="203"/>
        <end position="211"/>
    </location>
</feature>
<feature type="strand" evidence="8">
    <location>
        <begin position="215"/>
        <end position="218"/>
    </location>
</feature>
<feature type="helix" evidence="8">
    <location>
        <begin position="222"/>
        <end position="246"/>
    </location>
</feature>
<feature type="strand" evidence="8">
    <location>
        <begin position="252"/>
        <end position="254"/>
    </location>
</feature>
<feature type="helix" evidence="8">
    <location>
        <begin position="272"/>
        <end position="289"/>
    </location>
</feature>
<feature type="strand" evidence="8">
    <location>
        <begin position="296"/>
        <end position="299"/>
    </location>
</feature>
<feature type="helix" evidence="8">
    <location>
        <begin position="303"/>
        <end position="306"/>
    </location>
</feature>
<feature type="strand" evidence="8">
    <location>
        <begin position="310"/>
        <end position="323"/>
    </location>
</feature>
<feature type="strand" evidence="8">
    <location>
        <begin position="325"/>
        <end position="327"/>
    </location>
</feature>
<feature type="strand" evidence="8">
    <location>
        <begin position="329"/>
        <end position="336"/>
    </location>
</feature>
<feature type="turn" evidence="8">
    <location>
        <begin position="339"/>
        <end position="341"/>
    </location>
</feature>
<feature type="helix" evidence="8">
    <location>
        <begin position="344"/>
        <end position="348"/>
    </location>
</feature>
<feature type="strand" evidence="8">
    <location>
        <begin position="354"/>
        <end position="356"/>
    </location>
</feature>
<feature type="strand" evidence="8">
    <location>
        <begin position="365"/>
        <end position="371"/>
    </location>
</feature>
<feature type="strand" evidence="8">
    <location>
        <begin position="373"/>
        <end position="376"/>
    </location>
</feature>
<feature type="strand" evidence="8">
    <location>
        <begin position="380"/>
        <end position="388"/>
    </location>
</feature>
<feature type="strand" evidence="8">
    <location>
        <begin position="396"/>
        <end position="400"/>
    </location>
</feature>
<feature type="strand" evidence="8">
    <location>
        <begin position="403"/>
        <end position="407"/>
    </location>
</feature>
<feature type="helix" evidence="8">
    <location>
        <begin position="413"/>
        <end position="415"/>
    </location>
</feature>
<feature type="strand" evidence="8">
    <location>
        <begin position="420"/>
        <end position="425"/>
    </location>
</feature>
<feature type="strand" evidence="8">
    <location>
        <begin position="428"/>
        <end position="433"/>
    </location>
</feature>
<feature type="helix" evidence="8">
    <location>
        <begin position="438"/>
        <end position="442"/>
    </location>
</feature>